<feature type="transit peptide" description="Mitochondrion" evidence="9">
    <location>
        <begin position="1"/>
        <end status="unknown"/>
    </location>
</feature>
<feature type="chain" id="PRO_0000450679" description="Terminal uridylyltransferase 1">
    <location>
        <begin status="unknown"/>
        <end position="1120"/>
    </location>
</feature>
<feature type="domain" description="PAP-associated" evidence="4">
    <location>
        <begin position="659"/>
        <end position="697"/>
    </location>
</feature>
<feature type="zinc finger region" description="C2H2-type; atypical" evidence="3">
    <location>
        <begin position="222"/>
        <end position="253"/>
    </location>
</feature>
<feature type="region of interest" description="Disordered" evidence="5">
    <location>
        <begin position="1"/>
        <end position="156"/>
    </location>
</feature>
<feature type="region of interest" description="Disordered" evidence="5">
    <location>
        <begin position="196"/>
        <end position="221"/>
    </location>
</feature>
<feature type="region of interest" description="Important for catalytic activity and RNA binding" evidence="7">
    <location>
        <begin position="750"/>
        <end position="1120"/>
    </location>
</feature>
<feature type="region of interest" description="Involved in oligomerization" evidence="7">
    <location>
        <begin position="800"/>
        <end position="900"/>
    </location>
</feature>
<feature type="region of interest" description="Disordered" evidence="5">
    <location>
        <begin position="1047"/>
        <end position="1076"/>
    </location>
</feature>
<feature type="short sequence motif" description="Nucleotide recognition motif (NRM)" evidence="3">
    <location>
        <begin position="773"/>
        <end position="782"/>
    </location>
</feature>
<feature type="compositionally biased region" description="Polar residues" evidence="5">
    <location>
        <begin position="7"/>
        <end position="16"/>
    </location>
</feature>
<feature type="compositionally biased region" description="Low complexity" evidence="5">
    <location>
        <begin position="17"/>
        <end position="59"/>
    </location>
</feature>
<feature type="compositionally biased region" description="Basic residues" evidence="5">
    <location>
        <begin position="60"/>
        <end position="70"/>
    </location>
</feature>
<feature type="compositionally biased region" description="Basic and acidic residues" evidence="5">
    <location>
        <begin position="90"/>
        <end position="103"/>
    </location>
</feature>
<feature type="compositionally biased region" description="Polar residues" evidence="5">
    <location>
        <begin position="118"/>
        <end position="128"/>
    </location>
</feature>
<feature type="compositionally biased region" description="Low complexity" evidence="5">
    <location>
        <begin position="134"/>
        <end position="154"/>
    </location>
</feature>
<feature type="compositionally biased region" description="Low complexity" evidence="5">
    <location>
        <begin position="207"/>
        <end position="217"/>
    </location>
</feature>
<feature type="binding site" evidence="3">
    <location>
        <position position="227"/>
    </location>
    <ligand>
        <name>Zn(2+)</name>
        <dbReference type="ChEBI" id="CHEBI:29105"/>
    </ligand>
</feature>
<feature type="binding site" evidence="3">
    <location>
        <position position="230"/>
    </location>
    <ligand>
        <name>Zn(2+)</name>
        <dbReference type="ChEBI" id="CHEBI:29105"/>
    </ligand>
</feature>
<feature type="binding site" evidence="3">
    <location>
        <position position="244"/>
    </location>
    <ligand>
        <name>Zn(2+)</name>
        <dbReference type="ChEBI" id="CHEBI:29105"/>
    </ligand>
</feature>
<feature type="binding site" evidence="3">
    <location>
        <position position="249"/>
    </location>
    <ligand>
        <name>Zn(2+)</name>
        <dbReference type="ChEBI" id="CHEBI:29105"/>
    </ligand>
</feature>
<feature type="binding site" evidence="1">
    <location>
        <position position="330"/>
    </location>
    <ligand>
        <name>UTP</name>
        <dbReference type="ChEBI" id="CHEBI:46398"/>
    </ligand>
</feature>
<feature type="binding site" evidence="1">
    <location>
        <begin position="341"/>
        <end position="344"/>
    </location>
    <ligand>
        <name>UTP</name>
        <dbReference type="ChEBI" id="CHEBI:46398"/>
    </ligand>
</feature>
<feature type="binding site" evidence="2">
    <location>
        <position position="342"/>
    </location>
    <ligand>
        <name>Mg(2+)</name>
        <dbReference type="ChEBI" id="CHEBI:18420"/>
        <note>catalytic</note>
    </ligand>
</feature>
<feature type="binding site" evidence="2">
    <location>
        <position position="344"/>
    </location>
    <ligand>
        <name>Mg(2+)</name>
        <dbReference type="ChEBI" id="CHEBI:18420"/>
        <note>catalytic</note>
    </ligand>
</feature>
<feature type="binding site" evidence="1">
    <location>
        <position position="390"/>
    </location>
    <ligand>
        <name>RNA</name>
        <dbReference type="ChEBI" id="CHEBI:33697"/>
    </ligand>
</feature>
<feature type="binding site" evidence="11">
    <location>
        <position position="548"/>
    </location>
    <ligand>
        <name>Mg(2+)</name>
        <dbReference type="ChEBI" id="CHEBI:18420"/>
        <note>catalytic</note>
    </ligand>
</feature>
<feature type="binding site" evidence="3">
    <location>
        <begin position="555"/>
        <end position="559"/>
    </location>
    <ligand>
        <name>UTP</name>
        <dbReference type="ChEBI" id="CHEBI:46398"/>
    </ligand>
</feature>
<feature type="binding site" evidence="3">
    <location>
        <position position="580"/>
    </location>
    <ligand>
        <name>UTP</name>
        <dbReference type="ChEBI" id="CHEBI:46398"/>
    </ligand>
</feature>
<feature type="binding site" evidence="3">
    <location>
        <position position="584"/>
    </location>
    <ligand>
        <name>UTP</name>
        <dbReference type="ChEBI" id="CHEBI:46398"/>
    </ligand>
</feature>
<feature type="binding site" evidence="3">
    <location>
        <begin position="598"/>
        <end position="599"/>
    </location>
    <ligand>
        <name>UTP</name>
        <dbReference type="ChEBI" id="CHEBI:46398"/>
    </ligand>
</feature>
<feature type="site" description="Important for catalytic activity" evidence="2">
    <location>
        <position position="548"/>
    </location>
</feature>
<feature type="mutagenesis site" description="3-fold reduction in affinity for RNA. Does not affect affinity for UTP." evidence="7">
    <original>F</original>
    <variation>G</variation>
    <location>
        <position position="328"/>
    </location>
</feature>
<feature type="mutagenesis site" description="50-fold reduction in affinity for RNA and 7-fold increase in affinity for UTP." evidence="7">
    <original>S</original>
    <variation>A</variation>
    <location>
        <position position="330"/>
    </location>
</feature>
<feature type="mutagenesis site" description="Loss of catalytic activity." evidence="7">
    <original>D</original>
    <variation>A</variation>
    <location>
        <position position="342"/>
    </location>
</feature>
<feature type="mutagenesis site" description="Loss of catalytic activity." evidence="7">
    <original>D</original>
    <variation>A</variation>
    <location>
        <position position="344"/>
    </location>
</feature>
<feature type="mutagenesis site" description="Loss of catalytic activity." evidence="7">
    <original>R</original>
    <variation>F</variation>
    <location>
        <position position="390"/>
    </location>
</feature>
<feature type="mutagenesis site" description="Loss of catalytic activity." evidence="7">
    <original>K</original>
    <variation>D</variation>
    <location>
        <position position="395"/>
    </location>
</feature>
<feature type="mutagenesis site" description="Loss of catalytic activity. Does not affect tetramerization." evidence="7">
    <location>
        <begin position="400"/>
        <end position="543"/>
    </location>
</feature>
<feature type="mutagenesis site" description="Loss of catalytic activity. Does not affect gRNA binding." evidence="7">
    <original>D</original>
    <variation>A</variation>
    <location>
        <position position="548"/>
    </location>
</feature>
<feature type="mutagenesis site" description="6-fold reduction in affinity for UTP. Does not affect affinity for RNA." evidence="7">
    <original>K</original>
    <variation>A</variation>
    <location>
        <position position="580"/>
    </location>
</feature>
<feature type="mutagenesis site" description="Does not affect affinity for RNA and UTP." evidence="7">
    <original>S</original>
    <variation>A</variation>
    <location>
        <position position="598"/>
    </location>
</feature>
<feature type="mutagenesis site" description="Does not affect affinity for RNA and UTP." evidence="7">
    <original>Y</original>
    <variation>F</variation>
    <location>
        <position position="599"/>
    </location>
</feature>
<feature type="mutagenesis site" description="25-fold reduction in affinity for RNA. 2-fold increase in affinity for UTP." evidence="7">
    <original>D</original>
    <variation>A</variation>
    <location>
        <position position="775"/>
    </location>
</feature>
<keyword id="KW-0460">Magnesium</keyword>
<keyword id="KW-0464">Manganese</keyword>
<keyword id="KW-0479">Metal-binding</keyword>
<keyword id="KW-0496">Mitochondrion</keyword>
<keyword id="KW-0507">mRNA processing</keyword>
<keyword id="KW-0547">Nucleotide-binding</keyword>
<keyword id="KW-0548">Nucleotidyltransferase</keyword>
<keyword id="KW-0694">RNA-binding</keyword>
<keyword id="KW-0808">Transferase</keyword>
<keyword id="KW-0809">Transit peptide</keyword>
<keyword id="KW-0862">Zinc</keyword>
<keyword id="KW-0863">Zinc-finger</keyword>
<accession>Q8WQX6</accession>
<reference evidence="12" key="1">
    <citation type="journal article" date="2002" name="Cell">
        <title>Trypanosome mitochondrial 3' terminal uridylyl transferase (TUTase): the key enzyme in U-insertion/deletion RNA editing.</title>
        <authorList>
            <person name="Aphasizhev R."/>
            <person name="Sbicego S."/>
            <person name="Peris M."/>
            <person name="Jang S.H."/>
            <person name="Aphasizheva I."/>
            <person name="Simpson A.M."/>
            <person name="Rivlin A."/>
            <person name="Simpson L."/>
        </authorList>
    </citation>
    <scope>NUCLEOTIDE SEQUENCE [GENOMIC DNA]</scope>
    <scope>FUNCTION</scope>
    <scope>CATALYTIC ACTIVITY</scope>
    <scope>COFACTOR</scope>
    <scope>SUBUNIT</scope>
    <scope>INTERACTION WITH P45 AND P50 RNA LIGASES</scope>
    <scope>SUBCELLULAR LOCATION</scope>
</reference>
<reference key="2">
    <citation type="journal article" date="2002" name="Cell">
        <authorList>
            <person name="Aphasizhev R."/>
            <person name="Sbicego S."/>
            <person name="Peris M."/>
            <person name="Jang S.H."/>
            <person name="Aphasizheva I."/>
            <person name="Simpson A.M."/>
            <person name="Rivlin A."/>
            <person name="Simpson L."/>
        </authorList>
    </citation>
    <scope>ERRATUM OF PUBMED:11893335</scope>
</reference>
<reference key="3">
    <citation type="submission" date="2019-11" db="EMBL/GenBank/DDBJ databases">
        <title>Leishmania tarentolae CDS.</title>
        <authorList>
            <person name="Goto Y."/>
            <person name="Yamagishi J."/>
        </authorList>
    </citation>
    <scope>NUCLEOTIDE SEQUENCE [LARGE SCALE GENOMIC DNA]</scope>
    <source>
        <strain>Parrot Tar II</strain>
    </source>
</reference>
<reference evidence="9" key="4">
    <citation type="journal article" date="2004" name="J. Biol. Chem.">
        <title>RNA-editing terminal uridylyl transferase 1: identification of functional domains by mutational analysis.</title>
        <authorList>
            <person name="Aphasizheva I."/>
            <person name="Aphasizhev R."/>
            <person name="Simpson L."/>
        </authorList>
    </citation>
    <scope>FUNCTION</scope>
    <scope>CATALYTIC ACTIVITY</scope>
    <scope>ACTIVITY REGULATION</scope>
    <scope>BIOPHYSICOCHEMICAL PROPERTIES</scope>
    <scope>SUBUNIT</scope>
    <scope>MUTAGENESIS OF PHE-328; SER-330; ASP-342; ASP-344; ARG-390; LYS-395; 400-LEU--TYR-543; ASP-548; LYS-580; SER-598; TYR-599 AND ASP-775</scope>
</reference>
<dbReference type="EC" id="2.7.7.52" evidence="6 7"/>
<dbReference type="EMBL" id="AY029069">
    <property type="protein sequence ID" value="AAK38333.1"/>
    <property type="molecule type" value="Genomic_DNA"/>
</dbReference>
<dbReference type="EMBL" id="BLBS01000018">
    <property type="protein sequence ID" value="GET87125.1"/>
    <property type="molecule type" value="Genomic_DNA"/>
</dbReference>
<dbReference type="SMR" id="Q8WQX6"/>
<dbReference type="VEuPathDB" id="TriTrypDB:LtaPh_1409400"/>
<dbReference type="OrthoDB" id="2274644at2759"/>
<dbReference type="PhylomeDB" id="Q8WQX6"/>
<dbReference type="Proteomes" id="UP000419144">
    <property type="component" value="Unassembled WGS sequence"/>
</dbReference>
<dbReference type="GO" id="GO:0005739">
    <property type="term" value="C:mitochondrion"/>
    <property type="evidence" value="ECO:0000314"/>
    <property type="project" value="UniProtKB"/>
</dbReference>
<dbReference type="GO" id="GO:0000166">
    <property type="term" value="F:nucleotide binding"/>
    <property type="evidence" value="ECO:0007669"/>
    <property type="project" value="UniProtKB-KW"/>
</dbReference>
<dbReference type="GO" id="GO:0003723">
    <property type="term" value="F:RNA binding"/>
    <property type="evidence" value="ECO:0007669"/>
    <property type="project" value="UniProtKB-KW"/>
</dbReference>
<dbReference type="GO" id="GO:0050265">
    <property type="term" value="F:RNA uridylyltransferase activity"/>
    <property type="evidence" value="ECO:0000314"/>
    <property type="project" value="UniProtKB"/>
</dbReference>
<dbReference type="GO" id="GO:0008270">
    <property type="term" value="F:zinc ion binding"/>
    <property type="evidence" value="ECO:0007669"/>
    <property type="project" value="UniProtKB-KW"/>
</dbReference>
<dbReference type="GO" id="GO:0006397">
    <property type="term" value="P:mRNA processing"/>
    <property type="evidence" value="ECO:0007669"/>
    <property type="project" value="UniProtKB-KW"/>
</dbReference>
<dbReference type="GO" id="GO:0051260">
    <property type="term" value="P:protein homooligomerization"/>
    <property type="evidence" value="ECO:0000314"/>
    <property type="project" value="UniProtKB"/>
</dbReference>
<dbReference type="GO" id="GO:0031123">
    <property type="term" value="P:RNA 3'-end processing"/>
    <property type="evidence" value="ECO:0000314"/>
    <property type="project" value="UniProtKB"/>
</dbReference>
<dbReference type="CDD" id="cd05402">
    <property type="entry name" value="NT_PAP_TUTase"/>
    <property type="match status" value="1"/>
</dbReference>
<dbReference type="Gene3D" id="1.10.1410.10">
    <property type="match status" value="1"/>
</dbReference>
<dbReference type="Gene3D" id="3.30.460.10">
    <property type="entry name" value="Beta Polymerase, domain 2"/>
    <property type="match status" value="1"/>
</dbReference>
<dbReference type="InterPro" id="IPR054708">
    <property type="entry name" value="MTPAP-like_central"/>
</dbReference>
<dbReference type="InterPro" id="IPR043519">
    <property type="entry name" value="NT_sf"/>
</dbReference>
<dbReference type="InterPro" id="IPR002058">
    <property type="entry name" value="PAP_assoc"/>
</dbReference>
<dbReference type="PANTHER" id="PTHR12271">
    <property type="entry name" value="POLY A POLYMERASE CID PAP -RELATED"/>
    <property type="match status" value="1"/>
</dbReference>
<dbReference type="PANTHER" id="PTHR12271:SF98">
    <property type="entry name" value="RNA EDITING 3' TERMINAL URIDYLYL TRANSFERASE 1"/>
    <property type="match status" value="1"/>
</dbReference>
<dbReference type="Pfam" id="PF22600">
    <property type="entry name" value="MTPAP-like_central"/>
    <property type="match status" value="1"/>
</dbReference>
<dbReference type="Pfam" id="PF03828">
    <property type="entry name" value="PAP_assoc"/>
    <property type="match status" value="1"/>
</dbReference>
<dbReference type="SUPFAM" id="SSF81301">
    <property type="entry name" value="Nucleotidyltransferase"/>
    <property type="match status" value="1"/>
</dbReference>
<dbReference type="SUPFAM" id="SSF81631">
    <property type="entry name" value="PAP/OAS1 substrate-binding domain"/>
    <property type="match status" value="1"/>
</dbReference>
<dbReference type="PROSITE" id="PS50157">
    <property type="entry name" value="ZINC_FINGER_C2H2_2"/>
    <property type="match status" value="1"/>
</dbReference>
<gene>
    <name evidence="9" type="primary">KRET1</name>
    <name evidence="13" type="ORF">LtaPh_1409400</name>
</gene>
<comment type="function">
    <text evidence="6 7">Terminal uridylyltransferase which is involved in the post-transcriptional editing of mitochondrial RNA, a process involving the addition and deletion of uridine (U) nucleotides in the pre-mRNA. Specifically, catalyzes the addition of Us to the 3'-hydroxyl group of guided RNA (gRNA), with a preference for RNAs terminating in 6 Us, but also can add Us to RNAs terminating in 6 adenines (A), 6 cytosines (C), or 6 guanines (G) (PubMed:11893335, PubMed:15060068). Can mediate RNA-independent UTP polymerization in vitro (PubMed:15060068). Can mediate pyrophosphate-dependent degradation of synthetic RNA ending with U residues in vitro (PubMed:15060068).</text>
</comment>
<comment type="catalytic activity">
    <reaction evidence="6 7">
        <text>RNA(n) + UTP = RNA(n)-3'-uridine ribonucleotide + diphosphate</text>
        <dbReference type="Rhea" id="RHEA:14785"/>
        <dbReference type="Rhea" id="RHEA-COMP:14527"/>
        <dbReference type="Rhea" id="RHEA-COMP:17348"/>
        <dbReference type="ChEBI" id="CHEBI:33019"/>
        <dbReference type="ChEBI" id="CHEBI:46398"/>
        <dbReference type="ChEBI" id="CHEBI:140395"/>
        <dbReference type="ChEBI" id="CHEBI:173116"/>
        <dbReference type="EC" id="2.7.7.52"/>
    </reaction>
</comment>
<comment type="cofactor">
    <cofactor evidence="10">
        <name>Mg(2+)</name>
        <dbReference type="ChEBI" id="CHEBI:18420"/>
    </cofactor>
    <cofactor evidence="10">
        <name>Mn(2+)</name>
        <dbReference type="ChEBI" id="CHEBI:29035"/>
    </cofactor>
    <text evidence="6">Binds 1 Mg(2+) or Mn(2+) per subunit (PubMed:11893335). The type of divalent cation used by the enzyme affects the nucleotide specificity; Mg(2+) induces predominantly uridine (U) incorporation while Mn(2+) also induces substantial incorporation of both adenine (A) and cytosine (C) (PubMed:11893335).</text>
</comment>
<comment type="activity regulation">
    <text evidence="7">Zinc-binding is required for catalytic activity.</text>
</comment>
<comment type="biophysicochemical properties">
    <kinetics>
        <text evidence="7">KM is 45-65 uM for UTP (at 27 degrees Celsius) (PubMed:15060068). KM is 18-30 uM for RNA (at 27 degrees Celsius) (PubMed:15060068).</text>
    </kinetics>
</comment>
<comment type="subunit">
    <text evidence="6 7">Homotetramer (PubMed:11893335, PubMed:15060068). Part of a 700kDa complex (PubMed:11893335). Interacts with p45 and p50 RNA ligases (PubMed:11893335).</text>
</comment>
<comment type="subcellular location">
    <subcellularLocation>
        <location evidence="6">Mitochondrion</location>
    </subcellularLocation>
</comment>
<comment type="similarity">
    <text evidence="9">Belongs to the DNA polymerase type-B-like family.</text>
</comment>
<proteinExistence type="evidence at protein level"/>
<sequence>MSKYSLLFNQGTKDGTNASSGSEANSANITSSSAPASSTNTSSPTSSESAVVSPPASTSPRRRLIHRRHGSAGAAEVAPLSLPKRPQQPNEEKHENFISDSVHHCSNRGASGSELKALTTSGSETVMSASPDIAFEAPSPPTASASPPLESTSAVESDGDVVIDDMMRYQEGDSGGSRSATSAAAAGRAVSTNDAAALINGDPGPLSSAVSSSSSGSPHTPPRLFTCDMCLQYVSTSYEALEQHALDQHGDALADYTRLRSVAEKLVPVWDEVLKRKASVVQQWGKRIFAVAVQRDAGAEKMAEAHRARAQLELVVQRWHPRAKVFIFGSSVAFGVWDGISDIDFTVVDVDELEAGTWPPSEKNAVRSITELLRRAGFSFINLEPISHARVPIIKHHASLPIRLTDEQRHRLYEEARQSAAAVDLVAAESLASSSPSSAQETTDEKGLTQLEAELIIARSVRYSLNLPAGPPDSAILEASIRLAVGSAAVQQVWWNRTRDMCCMTFDTTTNAVKASTCPLHFMSAGMRARVQPLHEECRPELYGMDFDLSFRAFGIRNSHLLRRYLLSHPCARPGALVLKDWSKTSGVNNSVNGYLTSYAINIMWIYYLVHRGVIRYVCPARDIPASLRCNVDADPQYAAMVDPTWTPEERAAMEAQAGELLLGFFYYYAFEFDWVNHVVSLNRPGITTKASLGWDVEDVAQTGSPAPHFGVAGSQHQYNLAGAEGQQGDLHSGTSLSAPQTRPLTGYDGMMASSASAAARRSRATTRYSFCIEDPYEENLNLGRHMGVTKTLRVQTELYRGLLSLLKDDPQHCCVFAGSTNSSGSTDSNGAMASGAAEPAMVAARTPSEPTELPVRVLYKLMAISTRELAIARRRYSATVTAGTEFPGALLSDLEAAFLAQAPTEWKLARQVWNKHQLLHRLGLKLHAREYVLPRREVGVRRLAAKAPPGVVPASAPEPTFTAEEVAAAAAESGQAPFSAEHAPTSSEEVTQMNRAFLGAFPARRLPEDLMLAMTKGYSCLTPSWVAWSKPWAALSAWWTDRLHSPSTTTQGEDPLASGTCEQGGVSPSLPTGAPHHISAVPEKSAGAMHQTRTQLRRHVVAEIASTPAARRVLRLLFR</sequence>
<name>TUT1_LEITA</name>
<protein>
    <recommendedName>
        <fullName evidence="9">Terminal uridylyltransferase 1</fullName>
        <shortName evidence="8">TUTase 1</shortName>
        <ecNumber evidence="6 7">2.7.7.52</ecNumber>
    </recommendedName>
    <alternativeName>
        <fullName evidence="8">3' terminal uridylyl transferase</fullName>
        <shortName evidence="8">3' TUTase</shortName>
    </alternativeName>
    <alternativeName>
        <fullName evidence="9">RNA editing terminal uridylyltransferase 1</fullName>
        <shortName evidence="9">RET1</shortName>
        <shortName evidence="9">RNA editing TUTase 1</shortName>
    </alternativeName>
</protein>
<evidence type="ECO:0000250" key="1">
    <source>
        <dbReference type="UniProtKB" id="Q381M1"/>
    </source>
</evidence>
<evidence type="ECO:0000250" key="2">
    <source>
        <dbReference type="UniProtKB" id="Q86MV5"/>
    </source>
</evidence>
<evidence type="ECO:0000250" key="3">
    <source>
        <dbReference type="UniProtKB" id="Q8WQX5"/>
    </source>
</evidence>
<evidence type="ECO:0000255" key="4"/>
<evidence type="ECO:0000256" key="5">
    <source>
        <dbReference type="SAM" id="MobiDB-lite"/>
    </source>
</evidence>
<evidence type="ECO:0000269" key="6">
    <source>
    </source>
</evidence>
<evidence type="ECO:0000269" key="7">
    <source>
    </source>
</evidence>
<evidence type="ECO:0000303" key="8">
    <source>
    </source>
</evidence>
<evidence type="ECO:0000305" key="9"/>
<evidence type="ECO:0000305" key="10">
    <source>
    </source>
</evidence>
<evidence type="ECO:0000305" key="11">
    <source>
    </source>
</evidence>
<evidence type="ECO:0000312" key="12">
    <source>
        <dbReference type="EMBL" id="AAK38333.1"/>
    </source>
</evidence>
<evidence type="ECO:0000312" key="13">
    <source>
        <dbReference type="EMBL" id="GET87125.1"/>
    </source>
</evidence>
<organism evidence="12">
    <name type="scientific">Leishmania tarentolae</name>
    <name type="common">Sauroleishmania tarentolae</name>
    <dbReference type="NCBI Taxonomy" id="5689"/>
    <lineage>
        <taxon>Eukaryota</taxon>
        <taxon>Discoba</taxon>
        <taxon>Euglenozoa</taxon>
        <taxon>Kinetoplastea</taxon>
        <taxon>Metakinetoplastina</taxon>
        <taxon>Trypanosomatida</taxon>
        <taxon>Trypanosomatidae</taxon>
        <taxon>Leishmaniinae</taxon>
        <taxon>Leishmania</taxon>
        <taxon>lizard Leishmania</taxon>
    </lineage>
</organism>